<dbReference type="EC" id="2.7.7.48"/>
<dbReference type="EMBL" id="AY740741">
    <property type="protein sequence ID" value="AAU43799.1"/>
    <property type="molecule type" value="Genomic_RNA"/>
</dbReference>
<dbReference type="SMR" id="Q3ZK55"/>
<dbReference type="Proteomes" id="UP000008655">
    <property type="component" value="Genome"/>
</dbReference>
<dbReference type="GO" id="GO:0044423">
    <property type="term" value="C:virion component"/>
    <property type="evidence" value="ECO:0007669"/>
    <property type="project" value="UniProtKB-KW"/>
</dbReference>
<dbReference type="GO" id="GO:0000166">
    <property type="term" value="F:nucleotide binding"/>
    <property type="evidence" value="ECO:0007669"/>
    <property type="project" value="UniProtKB-KW"/>
</dbReference>
<dbReference type="GO" id="GO:0003723">
    <property type="term" value="F:RNA binding"/>
    <property type="evidence" value="ECO:0007669"/>
    <property type="project" value="UniProtKB-KW"/>
</dbReference>
<dbReference type="GO" id="GO:0003968">
    <property type="term" value="F:RNA-directed RNA polymerase activity"/>
    <property type="evidence" value="ECO:0007669"/>
    <property type="project" value="UniProtKB-KW"/>
</dbReference>
<dbReference type="GO" id="GO:0006351">
    <property type="term" value="P:DNA-templated transcription"/>
    <property type="evidence" value="ECO:0007669"/>
    <property type="project" value="InterPro"/>
</dbReference>
<dbReference type="GO" id="GO:0019079">
    <property type="term" value="P:viral genome replication"/>
    <property type="evidence" value="ECO:0007669"/>
    <property type="project" value="InterPro"/>
</dbReference>
<dbReference type="Gene3D" id="1.10.357.80">
    <property type="match status" value="2"/>
</dbReference>
<dbReference type="Gene3D" id="1.20.120.1390">
    <property type="match status" value="1"/>
</dbReference>
<dbReference type="Gene3D" id="3.30.230.140">
    <property type="match status" value="2"/>
</dbReference>
<dbReference type="Gene3D" id="3.30.70.2480">
    <property type="match status" value="1"/>
</dbReference>
<dbReference type="Gene3D" id="1.10.10.1990">
    <property type="entry name" value="Viral RNA-directed RNA polymerase, 4-helical domain"/>
    <property type="match status" value="1"/>
</dbReference>
<dbReference type="InterPro" id="IPR043502">
    <property type="entry name" value="DNA/RNA_pol_sf"/>
</dbReference>
<dbReference type="InterPro" id="IPR042032">
    <property type="entry name" value="RNA-dir_pol_4-hel_dom"/>
</dbReference>
<dbReference type="InterPro" id="IPR001795">
    <property type="entry name" value="RNA-dir_pol_luteovirus"/>
</dbReference>
<dbReference type="InterPro" id="IPR007097">
    <property type="entry name" value="RNA-dir_pol_reovirus"/>
</dbReference>
<dbReference type="InterPro" id="IPR022071">
    <property type="entry name" value="Rotavirus_VP1_C"/>
</dbReference>
<dbReference type="Pfam" id="PF02123">
    <property type="entry name" value="RdRP_4"/>
    <property type="match status" value="1"/>
</dbReference>
<dbReference type="Pfam" id="PF12289">
    <property type="entry name" value="Rotavirus_VP1"/>
    <property type="match status" value="1"/>
</dbReference>
<dbReference type="SUPFAM" id="SSF56672">
    <property type="entry name" value="DNA/RNA polymerases"/>
    <property type="match status" value="1"/>
</dbReference>
<dbReference type="PROSITE" id="PS50523">
    <property type="entry name" value="RDRP_DSRNA_REO"/>
    <property type="match status" value="1"/>
</dbReference>
<name>RDRP_ROT41</name>
<keyword id="KW-0460">Magnesium</keyword>
<keyword id="KW-0547">Nucleotide-binding</keyword>
<keyword id="KW-0548">Nucleotidyltransferase</keyword>
<keyword id="KW-0694">RNA-binding</keyword>
<keyword id="KW-0696">RNA-directed RNA polymerase</keyword>
<keyword id="KW-0808">Transferase</keyword>
<keyword id="KW-0693">Viral RNA replication</keyword>
<keyword id="KW-0946">Virion</keyword>
<comment type="function">
    <text evidence="2">RNA-directed RNA polymerase that is involved in both transcription and genome replication. Together with VP3 capping enzyme, forms an enzyme complex positioned near the channels situated at each of the five-fold vertices of the core. Following infection, the outermost layer of the virus is lost, leaving a double-layered particle (DLP) made up of the core and VP6 shell. VP1 then catalyzes the transcription of fully conservative plus-strand genomic RNAs that are extruded through the DLP's channels into the cytoplasm where they function as mRNAs for translation of viral proteins. One copy of each of the viral (+)RNAs is also recruited during core assembly, together with newly synthesized polymerase complexes and VP2. The polymerase of these novo-formed particles catalyzes the synthesis of complementary minus-strands leading to dsRNA formation. To do so, the polymerase specifically recognizes and binds 4 bases 5'-UGUG-3' in the conserved 3'-sequence of plus-strand RNA templates. VP2 presumably activates the autoinhibited VP1-RNA complex to coordinate packaging and genome replication. Once dsRNA synthesis is complete, the polymerase switches to the transcriptional mode, thus providing secondary transcription (By similarity).</text>
</comment>
<comment type="catalytic activity">
    <reaction evidence="2">
        <text>RNA(n) + a ribonucleoside 5'-triphosphate = RNA(n+1) + diphosphate</text>
        <dbReference type="Rhea" id="RHEA:21248"/>
        <dbReference type="Rhea" id="RHEA-COMP:14527"/>
        <dbReference type="Rhea" id="RHEA-COMP:17342"/>
        <dbReference type="ChEBI" id="CHEBI:33019"/>
        <dbReference type="ChEBI" id="CHEBI:61557"/>
        <dbReference type="ChEBI" id="CHEBI:140395"/>
        <dbReference type="EC" id="2.7.7.48"/>
    </reaction>
</comment>
<comment type="cofactor">
    <cofactor evidence="3">
        <name>Mg(2+)</name>
        <dbReference type="ChEBI" id="CHEBI:18420"/>
    </cofactor>
</comment>
<comment type="subunit">
    <text evidence="1 3">Interacts with VP3 (Potential). Interacts with VP2; this interaction activates VP1. Interacts with NSP5; this interaction is probably necessary for the formation of functional virus factories. Interacts with NSP2; this interaction is weak (By similarity).</text>
</comment>
<comment type="subcellular location">
    <subcellularLocation>
        <location evidence="3">Virion</location>
    </subcellularLocation>
    <text evidence="1">Attached inside the inner capsid as a minor component. Also found in spherical cytoplasmic structures, called virus factories, that appear early after infection and are the site of viral replication and packaging (By similarity).</text>
</comment>
<comment type="similarity">
    <text evidence="3">Belongs to the reoviridae RNA-directed RNA polymerase family.</text>
</comment>
<evidence type="ECO:0000250" key="1"/>
<evidence type="ECO:0000255" key="2">
    <source>
        <dbReference type="PROSITE-ProRule" id="PRU00539"/>
    </source>
</evidence>
<evidence type="ECO:0000305" key="3"/>
<proteinExistence type="inferred from homology"/>
<sequence length="1088" mass="125047">MGKYNLILSEYLSFIYNSQSAVQIPIYYSSNSELENRCIEFHSKCLENSKNGLSLKKLFTEYSDVIENATLLSILSYSYDKYNAVERKLVKYAKGKPLEADLTVNELDYENNKITSELFPTAEEYTDSLMDPAILTSLSSNLNAVMFWLEKHENDVAEKLKIYKRRLDLFTIVASTVNKYGVPRHNAKYRYDYEVMKDKPYYLVTWANSSIEMLMSVFSHEDYLIARELIVLSYSNRSTLAKLVSSPMSILVALVDINGTFITNEELELEFSNKYVRAIVPDQTFDELKQMIDNMRKAGLTDIPKMIQDWLVDCSIEKFPLMAKIYSWSFHVGFRKQKMLDAALDQLKTEYTEDVDDEMYREYTMLIRDEVVKMLEEPVKHDDHLLQDSELAGLLSMSSASNGESRQLKFGRKTIFSTKKNMHVMDDMANGRYTPGIIPPVNVDKPIPLGRRDVPGRRTRIIFILPYEYFIAQHAVVEKMLIYAKHTREYAEFYSQSNQLLSYGDVTRFLSNNAMVLYTDVSQWDSSQHNTQPFRKGIIMGLDMLANMTNDARVIQTLNLYKQTQINLMDSYVQIPDGNIIKKIQYGAVASGEKQTKAANSIANLALIKTVLSRISNKHSFVTKIIRVDGDDNYAVLQFNTEVTKQMVQDVSNDVRETYARMNAKVKALVSTVGIEIAKRYIAGGKIFFRAGINLLNNEKRGQSTQWDQAAVLYSNYIVNRLRGFETDREFILTKIMQMTSVAITGSLRLFPSERVLTTNSTFKVFDSEDFIIEYGTTDDEVYIQRAFMSLSSQKSGIADEIAASSTFKNYVSKLSEQLLSSKNNIVSRGIALTEKAKLNSYAPISLEKRRAQISALLTMLQKPVTFKSSKITINDILRDIKPFFTVSEAYLPIQYQKFMPTLPDNVQYIIQCIGSRTYQIEDDGSKSAISRLISKYSVYKPSIEELYKVISLHENEIQLYLISLGIPKIDADTYVGSKIYSQDKYRILESYVYNLMSINYGCYQLFDFNSPDLEKLIRIPFKGKIPAVTFILHLYAKLEVINYAIKNGSWISLFCNYPKSEMIKLWKKMWNITSLRSPYTNANFFQD</sequence>
<organismHost>
    <name type="scientific">Homo sapiens</name>
    <name type="common">Human</name>
    <dbReference type="NCBI Taxonomy" id="9606"/>
</organismHost>
<feature type="chain" id="PRO_0000368032" description="RNA-directed RNA polymerase">
    <location>
        <begin position="1"/>
        <end position="1088"/>
    </location>
</feature>
<feature type="domain" description="RdRp catalytic" evidence="2">
    <location>
        <begin position="501"/>
        <end position="687"/>
    </location>
</feature>
<reference key="1">
    <citation type="journal article" date="2006" name="J. Virol.">
        <title>Full genomic analysis of human rotavirus strain B4106 and lapine rotavirus strain 30/96 provides evidence for interspecies transmission.</title>
        <authorList>
            <person name="Matthijnssens J."/>
            <person name="Rahman M."/>
            <person name="Martella V."/>
            <person name="Xuelei Y."/>
            <person name="De Vos S."/>
            <person name="De Leener K."/>
            <person name="Ciarlet M."/>
            <person name="Buonavoglia C."/>
            <person name="Van Ranst M."/>
        </authorList>
    </citation>
    <scope>NUCLEOTIDE SEQUENCE [GENOMIC RNA]</scope>
</reference>
<protein>
    <recommendedName>
        <fullName>RNA-directed RNA polymerase</fullName>
        <ecNumber>2.7.7.48</ecNumber>
    </recommendedName>
    <alternativeName>
        <fullName>Protein VP1</fullName>
    </alternativeName>
</protein>
<accession>Q3ZK55</accession>
<organism>
    <name type="scientific">Rotavirus A (isolate RVA/Human/Belgium/B4106/2000/G3P11[14])</name>
    <name type="common">RV-A</name>
    <name type="synonym">Rotavirus A (isolate B4106)</name>
    <dbReference type="NCBI Taxonomy" id="578843"/>
    <lineage>
        <taxon>Viruses</taxon>
        <taxon>Riboviria</taxon>
        <taxon>Orthornavirae</taxon>
        <taxon>Duplornaviricota</taxon>
        <taxon>Resentoviricetes</taxon>
        <taxon>Reovirales</taxon>
        <taxon>Sedoreoviridae</taxon>
        <taxon>Rotavirus</taxon>
        <taxon>Rotavirus A</taxon>
    </lineage>
</organism>